<reference key="1">
    <citation type="journal article" date="2000" name="Am. J. Bot.">
        <title>Phylogenetic systematics of the tribe Millettieae (Leguminosae) based on chloroplast trnK/matK sequences and its implications for evolutionary patterns in Papilionoideae.</title>
        <authorList>
            <person name="Hu J.-M."/>
            <person name="Lavin M."/>
            <person name="Wojciechowski M.F."/>
            <person name="Sanderson M.J."/>
        </authorList>
    </citation>
    <scope>NUCLEOTIDE SEQUENCE [GENOMIC DNA]</scope>
</reference>
<feature type="chain" id="PRO_0000143269" description="Maturase K">
    <location>
        <begin position="1"/>
        <end position="506"/>
    </location>
</feature>
<evidence type="ECO:0000255" key="1">
    <source>
        <dbReference type="HAMAP-Rule" id="MF_01390"/>
    </source>
</evidence>
<sequence length="506" mass="61318">MDEYQVYLELDRSRNHDFLYPLIFREYIYGLAYGHDLNRSVFVENISYDNKSSLLIVKRLITRMYQQTYLIIFPNDSNKNPFWGYNNNFYSQIISEGFVIVVEIPFFLQFSSSLEETKIVKYYKNLRSIHSIFPLFEDKFTYLNHESDIRIPYPIHLEILVQILRYWIKDVPFLHLLRLFFYYYCNWNSLITPQKSISTFSKNNPRFFLFLFNFYVWEYESIFLFLRNKSTHLRLKSFRVLIERISFYAKVEHLVEVFAKDFSYTLSFFKDPFIHYVRYQGKSILVSKNMPLLMNKWKSYFIHLWQCHFDVWSQPRTIHIKQLSKHSFYFLGYFLNVQLNLSVVRSQMLQNSFLTEIVMKKLDTIVPIILLIRSLAKAKFCNVLGHPISKPVWADLSDFDIIDRFLWICRNFSQYYNGSSKKKSLYRIKYILRLSCIKTLSRKHKSTVRAFLKRLDSEKLLEEFFTEEEDIFSLIFSKTSSTLQRLYRGRIWYLDLLFSNDLINYS</sequence>
<dbReference type="EMBL" id="AF142707">
    <property type="protein sequence ID" value="AAD52879.1"/>
    <property type="molecule type" value="Genomic_DNA"/>
</dbReference>
<dbReference type="GO" id="GO:0009507">
    <property type="term" value="C:chloroplast"/>
    <property type="evidence" value="ECO:0007669"/>
    <property type="project" value="UniProtKB-SubCell"/>
</dbReference>
<dbReference type="GO" id="GO:0003723">
    <property type="term" value="F:RNA binding"/>
    <property type="evidence" value="ECO:0007669"/>
    <property type="project" value="UniProtKB-KW"/>
</dbReference>
<dbReference type="GO" id="GO:0006397">
    <property type="term" value="P:mRNA processing"/>
    <property type="evidence" value="ECO:0007669"/>
    <property type="project" value="UniProtKB-KW"/>
</dbReference>
<dbReference type="GO" id="GO:0008380">
    <property type="term" value="P:RNA splicing"/>
    <property type="evidence" value="ECO:0007669"/>
    <property type="project" value="UniProtKB-UniRule"/>
</dbReference>
<dbReference type="GO" id="GO:0008033">
    <property type="term" value="P:tRNA processing"/>
    <property type="evidence" value="ECO:0007669"/>
    <property type="project" value="UniProtKB-KW"/>
</dbReference>
<dbReference type="HAMAP" id="MF_01390">
    <property type="entry name" value="MatK"/>
    <property type="match status" value="1"/>
</dbReference>
<dbReference type="InterPro" id="IPR024937">
    <property type="entry name" value="Domain_X"/>
</dbReference>
<dbReference type="InterPro" id="IPR002866">
    <property type="entry name" value="Maturase_MatK"/>
</dbReference>
<dbReference type="InterPro" id="IPR024942">
    <property type="entry name" value="Maturase_MatK_N"/>
</dbReference>
<dbReference type="PANTHER" id="PTHR34811">
    <property type="entry name" value="MATURASE K"/>
    <property type="match status" value="1"/>
</dbReference>
<dbReference type="PANTHER" id="PTHR34811:SF1">
    <property type="entry name" value="MATURASE K"/>
    <property type="match status" value="1"/>
</dbReference>
<dbReference type="Pfam" id="PF01348">
    <property type="entry name" value="Intron_maturas2"/>
    <property type="match status" value="1"/>
</dbReference>
<dbReference type="Pfam" id="PF01824">
    <property type="entry name" value="MatK_N"/>
    <property type="match status" value="1"/>
</dbReference>
<geneLocation type="chloroplast"/>
<organism>
    <name type="scientific">Austrosteenisia blackii</name>
    <name type="common">Blood vine</name>
    <dbReference type="NCBI Taxonomy" id="53833"/>
    <lineage>
        <taxon>Eukaryota</taxon>
        <taxon>Viridiplantae</taxon>
        <taxon>Streptophyta</taxon>
        <taxon>Embryophyta</taxon>
        <taxon>Tracheophyta</taxon>
        <taxon>Spermatophyta</taxon>
        <taxon>Magnoliopsida</taxon>
        <taxon>eudicotyledons</taxon>
        <taxon>Gunneridae</taxon>
        <taxon>Pentapetalae</taxon>
        <taxon>rosids</taxon>
        <taxon>fabids</taxon>
        <taxon>Fabales</taxon>
        <taxon>Fabaceae</taxon>
        <taxon>Papilionoideae</taxon>
        <taxon>50 kb inversion clade</taxon>
        <taxon>NPAAA clade</taxon>
        <taxon>indigoferoid/millettioid clade</taxon>
        <taxon>Millettieae</taxon>
        <taxon>Austrosteenisia</taxon>
    </lineage>
</organism>
<keyword id="KW-0150">Chloroplast</keyword>
<keyword id="KW-0507">mRNA processing</keyword>
<keyword id="KW-0934">Plastid</keyword>
<keyword id="KW-0694">RNA-binding</keyword>
<keyword id="KW-0819">tRNA processing</keyword>
<accession>Q9TKR9</accession>
<proteinExistence type="inferred from homology"/>
<comment type="function">
    <text evidence="1">Usually encoded in the trnK tRNA gene intron. Probably assists in splicing its own and other chloroplast group II introns.</text>
</comment>
<comment type="subcellular location">
    <subcellularLocation>
        <location>Plastid</location>
        <location>Chloroplast</location>
    </subcellularLocation>
</comment>
<comment type="similarity">
    <text evidence="1">Belongs to the intron maturase 2 family. MatK subfamily.</text>
</comment>
<protein>
    <recommendedName>
        <fullName evidence="1">Maturase K</fullName>
    </recommendedName>
    <alternativeName>
        <fullName evidence="1">Intron maturase</fullName>
    </alternativeName>
</protein>
<gene>
    <name evidence="1" type="primary">matK</name>
</gene>
<name>MATK_AUSBL</name>